<sequence>MKVSWPGENHWQVGPAVVESPAVGAPQVGGLPDVVPEGTLLNMVLKRMHRPRCCSYQLVFEHRRPSCIQGLRWTPLTNSEGSLDFRVSLEQATTEHVHKAGKLLYRHLLATYPTLIRDRKYHLRLHRQCCSGRELVDGILALGLGVHSRSQAVGICQVLLDEGALCHVKHDWTFQDRDAQFYRFPGPEPQPAGTHDVEEELVEAMALLSQRGPDALLTVALRKSPGQRTDEELDLIFEELVHIKAVAHLSNSVKRELAAVLLFEPHSKAGTVLFSQGDKGTSWYIIWKGSVNVVTRGKGLVTTLHEGDDFGQLALVNDAPRAATIILRENNCHFLRVDKQDFNRIIKDVEAKTMRLEEHGKVVLVLERTSQGAGPSRPPTPGRNRYTVMSGTPEKILELLLEAMRPDSSAHDPTETFLSDFLLTHSVFMPCTQLFAALLHHFHVEPSEPAGGSEQERSTYICNKRQQILRLVSRWVALYSPMLRSDPVATSFLQKLSDLVSRDTRLSNLLREQYPERRRHHRLENGCGNVSPQTKARNAPVWFPNHEEPLPSSAGAIRVGDKVPYDICRPDHSVLTLHLPVTASVREVMAALAHEDHWTKGQVLVKVNSAGDVVGLQPDARGVATSLGLNERIFVVDPQEVHELTPHPEQLGPTLGSSEMLDLVSAKDLAGQLTEHDWNLFNRIHQVELIHYVLGPQHLRDVTTANLERFMRRFNELQYWVATELCLCPVPGPRAQLLRKFIKLAAHLKEQKNLNSFFAVMFGLSNSAISRLAHTWERLPHKVRKLYSALERLLDPSWNHRVYRLALTKLSPPVIPFMPLLLKDMTFIHEGNHTLVENLINFEKMRMMARAVRMLHHCRSHSTAPLSPLRSRVSHIHEDSQASRISTCSEQSLSTRSPASTWAYVQQLKVIDNQRELSRLSRELEP</sequence>
<protein>
    <recommendedName>
        <fullName>Rap guanine nucleotide exchange factor 3</fullName>
    </recommendedName>
    <alternativeName>
        <fullName>Exchange factor directly activated by cAMP 1</fullName>
    </alternativeName>
    <alternativeName>
        <fullName>Exchange protein directly activated by cAMP 1</fullName>
        <shortName>EPAC 1</shortName>
    </alternativeName>
    <alternativeName>
        <fullName>cAMP-regulated guanine nucleotide exchange factor I</fullName>
        <shortName>cAMP-GEFI</shortName>
    </alternativeName>
</protein>
<proteinExistence type="evidence at transcript level"/>
<reference key="1">
    <citation type="journal article" date="2004" name="Nature">
        <title>Genome sequence of the Brown Norway rat yields insights into mammalian evolution.</title>
        <authorList>
            <person name="Gibbs R.A."/>
            <person name="Weinstock G.M."/>
            <person name="Metzker M.L."/>
            <person name="Muzny D.M."/>
            <person name="Sodergren E.J."/>
            <person name="Scherer S."/>
            <person name="Scott G."/>
            <person name="Steffen D."/>
            <person name="Worley K.C."/>
            <person name="Burch P.E."/>
            <person name="Okwuonu G."/>
            <person name="Hines S."/>
            <person name="Lewis L."/>
            <person name="Deramo C."/>
            <person name="Delgado O."/>
            <person name="Dugan-Rocha S."/>
            <person name="Miner G."/>
            <person name="Morgan M."/>
            <person name="Hawes A."/>
            <person name="Gill R."/>
            <person name="Holt R.A."/>
            <person name="Adams M.D."/>
            <person name="Amanatides P.G."/>
            <person name="Baden-Tillson H."/>
            <person name="Barnstead M."/>
            <person name="Chin S."/>
            <person name="Evans C.A."/>
            <person name="Ferriera S."/>
            <person name="Fosler C."/>
            <person name="Glodek A."/>
            <person name="Gu Z."/>
            <person name="Jennings D."/>
            <person name="Kraft C.L."/>
            <person name="Nguyen T."/>
            <person name="Pfannkoch C.M."/>
            <person name="Sitter C."/>
            <person name="Sutton G.G."/>
            <person name="Venter J.C."/>
            <person name="Woodage T."/>
            <person name="Smith D."/>
            <person name="Lee H.-M."/>
            <person name="Gustafson E."/>
            <person name="Cahill P."/>
            <person name="Kana A."/>
            <person name="Doucette-Stamm L."/>
            <person name="Weinstock K."/>
            <person name="Fechtel K."/>
            <person name="Weiss R.B."/>
            <person name="Dunn D.M."/>
            <person name="Green E.D."/>
            <person name="Blakesley R.W."/>
            <person name="Bouffard G.G."/>
            <person name="De Jong P.J."/>
            <person name="Osoegawa K."/>
            <person name="Zhu B."/>
            <person name="Marra M."/>
            <person name="Schein J."/>
            <person name="Bosdet I."/>
            <person name="Fjell C."/>
            <person name="Jones S."/>
            <person name="Krzywinski M."/>
            <person name="Mathewson C."/>
            <person name="Siddiqui A."/>
            <person name="Wye N."/>
            <person name="McPherson J."/>
            <person name="Zhao S."/>
            <person name="Fraser C.M."/>
            <person name="Shetty J."/>
            <person name="Shatsman S."/>
            <person name="Geer K."/>
            <person name="Chen Y."/>
            <person name="Abramzon S."/>
            <person name="Nierman W.C."/>
            <person name="Havlak P.H."/>
            <person name="Chen R."/>
            <person name="Durbin K.J."/>
            <person name="Egan A."/>
            <person name="Ren Y."/>
            <person name="Song X.-Z."/>
            <person name="Li B."/>
            <person name="Liu Y."/>
            <person name="Qin X."/>
            <person name="Cawley S."/>
            <person name="Cooney A.J."/>
            <person name="D'Souza L.M."/>
            <person name="Martin K."/>
            <person name="Wu J.Q."/>
            <person name="Gonzalez-Garay M.L."/>
            <person name="Jackson A.R."/>
            <person name="Kalafus K.J."/>
            <person name="McLeod M.P."/>
            <person name="Milosavljevic A."/>
            <person name="Virk D."/>
            <person name="Volkov A."/>
            <person name="Wheeler D.A."/>
            <person name="Zhang Z."/>
            <person name="Bailey J.A."/>
            <person name="Eichler E.E."/>
            <person name="Tuzun E."/>
            <person name="Birney E."/>
            <person name="Mongin E."/>
            <person name="Ureta-Vidal A."/>
            <person name="Woodwark C."/>
            <person name="Zdobnov E."/>
            <person name="Bork P."/>
            <person name="Suyama M."/>
            <person name="Torrents D."/>
            <person name="Alexandersson M."/>
            <person name="Trask B.J."/>
            <person name="Young J.M."/>
            <person name="Huang H."/>
            <person name="Wang H."/>
            <person name="Xing H."/>
            <person name="Daniels S."/>
            <person name="Gietzen D."/>
            <person name="Schmidt J."/>
            <person name="Stevens K."/>
            <person name="Vitt U."/>
            <person name="Wingrove J."/>
            <person name="Camara F."/>
            <person name="Mar Alba M."/>
            <person name="Abril J.F."/>
            <person name="Guigo R."/>
            <person name="Smit A."/>
            <person name="Dubchak I."/>
            <person name="Rubin E.M."/>
            <person name="Couronne O."/>
            <person name="Poliakov A."/>
            <person name="Huebner N."/>
            <person name="Ganten D."/>
            <person name="Goesele C."/>
            <person name="Hummel O."/>
            <person name="Kreitler T."/>
            <person name="Lee Y.-A."/>
            <person name="Monti J."/>
            <person name="Schulz H."/>
            <person name="Zimdahl H."/>
            <person name="Himmelbauer H."/>
            <person name="Lehrach H."/>
            <person name="Jacob H.J."/>
            <person name="Bromberg S."/>
            <person name="Gullings-Handley J."/>
            <person name="Jensen-Seaman M.I."/>
            <person name="Kwitek A.E."/>
            <person name="Lazar J."/>
            <person name="Pasko D."/>
            <person name="Tonellato P.J."/>
            <person name="Twigger S."/>
            <person name="Ponting C.P."/>
            <person name="Duarte J.M."/>
            <person name="Rice S."/>
            <person name="Goodstadt L."/>
            <person name="Beatson S.A."/>
            <person name="Emes R.D."/>
            <person name="Winter E.E."/>
            <person name="Webber C."/>
            <person name="Brandt P."/>
            <person name="Nyakatura G."/>
            <person name="Adetobi M."/>
            <person name="Chiaromonte F."/>
            <person name="Elnitski L."/>
            <person name="Eswara P."/>
            <person name="Hardison R.C."/>
            <person name="Hou M."/>
            <person name="Kolbe D."/>
            <person name="Makova K."/>
            <person name="Miller W."/>
            <person name="Nekrutenko A."/>
            <person name="Riemer C."/>
            <person name="Schwartz S."/>
            <person name="Taylor J."/>
            <person name="Yang S."/>
            <person name="Zhang Y."/>
            <person name="Lindpaintner K."/>
            <person name="Andrews T.D."/>
            <person name="Caccamo M."/>
            <person name="Clamp M."/>
            <person name="Clarke L."/>
            <person name="Curwen V."/>
            <person name="Durbin R.M."/>
            <person name="Eyras E."/>
            <person name="Searle S.M."/>
            <person name="Cooper G.M."/>
            <person name="Batzoglou S."/>
            <person name="Brudno M."/>
            <person name="Sidow A."/>
            <person name="Stone E.A."/>
            <person name="Payseur B.A."/>
            <person name="Bourque G."/>
            <person name="Lopez-Otin C."/>
            <person name="Puente X.S."/>
            <person name="Chakrabarti K."/>
            <person name="Chatterji S."/>
            <person name="Dewey C."/>
            <person name="Pachter L."/>
            <person name="Bray N."/>
            <person name="Yap V.B."/>
            <person name="Caspi A."/>
            <person name="Tesler G."/>
            <person name="Pevzner P.A."/>
            <person name="Haussler D."/>
            <person name="Roskin K.M."/>
            <person name="Baertsch R."/>
            <person name="Clawson H."/>
            <person name="Furey T.S."/>
            <person name="Hinrichs A.S."/>
            <person name="Karolchik D."/>
            <person name="Kent W.J."/>
            <person name="Rosenbloom K.R."/>
            <person name="Trumbower H."/>
            <person name="Weirauch M."/>
            <person name="Cooper D.N."/>
            <person name="Stenson P.D."/>
            <person name="Ma B."/>
            <person name="Brent M."/>
            <person name="Arumugam M."/>
            <person name="Shteynberg D."/>
            <person name="Copley R.R."/>
            <person name="Taylor M.S."/>
            <person name="Riethman H."/>
            <person name="Mudunuri U."/>
            <person name="Peterson J."/>
            <person name="Guyer M."/>
            <person name="Felsenfeld A."/>
            <person name="Old S."/>
            <person name="Mockrin S."/>
            <person name="Collins F.S."/>
        </authorList>
    </citation>
    <scope>NUCLEOTIDE SEQUENCE [LARGE SCALE GENOMIC DNA]</scope>
    <source>
        <strain>Brown Norway</strain>
    </source>
</reference>
<reference key="2">
    <citation type="journal article" date="1998" name="Science">
        <title>A family of cAMP-binding proteins that directly activate rap1.</title>
        <authorList>
            <person name="Kawasaki H."/>
            <person name="Springett G.M."/>
            <person name="Mochizuki N."/>
            <person name="Toki S."/>
            <person name="Nakaya M."/>
            <person name="Matsuda M."/>
            <person name="Housman D.E."/>
            <person name="Graybiel A.M."/>
        </authorList>
    </citation>
    <scope>NUCLEOTIDE SEQUENCE [MRNA] (ISOFORM 2)</scope>
    <scope>TISSUE SPECIFICITY</scope>
</reference>
<gene>
    <name type="primary">Rapgef3</name>
    <name type="synonym">Epac</name>
    <name type="synonym">Epac1</name>
</gene>
<dbReference type="EMBL" id="AABR03056109">
    <property type="status" value="NOT_ANNOTATED_CDS"/>
    <property type="molecule type" value="Genomic_DNA"/>
</dbReference>
<dbReference type="EMBL" id="AABR03058672">
    <property type="status" value="NOT_ANNOTATED_CDS"/>
    <property type="molecule type" value="Genomic_DNA"/>
</dbReference>
<dbReference type="EMBL" id="U78167">
    <property type="protein sequence ID" value="AAD12739.1"/>
    <property type="molecule type" value="mRNA"/>
</dbReference>
<dbReference type="RefSeq" id="NP_067722.1">
    <property type="nucleotide sequence ID" value="NM_021690.1"/>
</dbReference>
<dbReference type="SMR" id="Q9Z1C8"/>
<dbReference type="BioGRID" id="248769">
    <property type="interactions" value="1"/>
</dbReference>
<dbReference type="FunCoup" id="Q9Z1C8">
    <property type="interactions" value="1037"/>
</dbReference>
<dbReference type="STRING" id="10116.ENSRNOP00000069952"/>
<dbReference type="GlyGen" id="Q9Z1C8">
    <property type="glycosylation" value="1 site"/>
</dbReference>
<dbReference type="iPTMnet" id="Q9Z1C8"/>
<dbReference type="PhosphoSitePlus" id="Q9Z1C8"/>
<dbReference type="PaxDb" id="10116-ENSRNOP00000061597"/>
<dbReference type="GeneID" id="59326"/>
<dbReference type="KEGG" id="rno:59326"/>
<dbReference type="UCSC" id="RGD:621869">
    <molecule id="Q9Z1C8-1"/>
    <property type="organism name" value="rat"/>
</dbReference>
<dbReference type="AGR" id="RGD:621869"/>
<dbReference type="CTD" id="10411"/>
<dbReference type="RGD" id="621869">
    <property type="gene designation" value="Rapgef3"/>
</dbReference>
<dbReference type="eggNOG" id="KOG2378">
    <property type="taxonomic scope" value="Eukaryota"/>
</dbReference>
<dbReference type="InParanoid" id="Q9Z1C8"/>
<dbReference type="PhylomeDB" id="Q9Z1C8"/>
<dbReference type="Reactome" id="R-RNO-354192">
    <property type="pathway name" value="Integrin signaling"/>
</dbReference>
<dbReference type="Reactome" id="R-RNO-381676">
    <property type="pathway name" value="Glucagon-like Peptide-1 (GLP1) regulates insulin secretion"/>
</dbReference>
<dbReference type="Reactome" id="R-RNO-392517">
    <property type="pathway name" value="Rap1 signalling"/>
</dbReference>
<dbReference type="Reactome" id="R-RNO-422356">
    <property type="pathway name" value="Regulation of insulin secretion"/>
</dbReference>
<dbReference type="PRO" id="PR:Q9Z1C8"/>
<dbReference type="Proteomes" id="UP000002494">
    <property type="component" value="Unplaced"/>
</dbReference>
<dbReference type="GO" id="GO:0045177">
    <property type="term" value="C:apical part of cell"/>
    <property type="evidence" value="ECO:0000314"/>
    <property type="project" value="RGD"/>
</dbReference>
<dbReference type="GO" id="GO:0043679">
    <property type="term" value="C:axon terminus"/>
    <property type="evidence" value="ECO:0000314"/>
    <property type="project" value="RGD"/>
</dbReference>
<dbReference type="GO" id="GO:0009925">
    <property type="term" value="C:basal plasma membrane"/>
    <property type="evidence" value="ECO:0000314"/>
    <property type="project" value="RGD"/>
</dbReference>
<dbReference type="GO" id="GO:1990794">
    <property type="term" value="C:basolateral part of cell"/>
    <property type="evidence" value="ECO:0000314"/>
    <property type="project" value="RGD"/>
</dbReference>
<dbReference type="GO" id="GO:0031526">
    <property type="term" value="C:brush border membrane"/>
    <property type="evidence" value="ECO:0000314"/>
    <property type="project" value="RGD"/>
</dbReference>
<dbReference type="GO" id="GO:0030864">
    <property type="term" value="C:cortical actin cytoskeleton"/>
    <property type="evidence" value="ECO:0000266"/>
    <property type="project" value="RGD"/>
</dbReference>
<dbReference type="GO" id="GO:0030175">
    <property type="term" value="C:filopodium"/>
    <property type="evidence" value="ECO:0000314"/>
    <property type="project" value="UniProtKB"/>
</dbReference>
<dbReference type="GO" id="GO:0030426">
    <property type="term" value="C:growth cone"/>
    <property type="evidence" value="ECO:0000314"/>
    <property type="project" value="RGD"/>
</dbReference>
<dbReference type="GO" id="GO:0030027">
    <property type="term" value="C:lamellipodium"/>
    <property type="evidence" value="ECO:0000314"/>
    <property type="project" value="UniProtKB"/>
</dbReference>
<dbReference type="GO" id="GO:0005902">
    <property type="term" value="C:microvillus"/>
    <property type="evidence" value="ECO:0000314"/>
    <property type="project" value="UniProtKB"/>
</dbReference>
<dbReference type="GO" id="GO:0043025">
    <property type="term" value="C:neuronal cell body"/>
    <property type="evidence" value="ECO:0000314"/>
    <property type="project" value="RGD"/>
</dbReference>
<dbReference type="GO" id="GO:0048471">
    <property type="term" value="C:perinuclear region of cytoplasm"/>
    <property type="evidence" value="ECO:0000314"/>
    <property type="project" value="RGD"/>
</dbReference>
<dbReference type="GO" id="GO:1990796">
    <property type="term" value="C:photoreceptor cell terminal bouton"/>
    <property type="evidence" value="ECO:0000314"/>
    <property type="project" value="RGD"/>
</dbReference>
<dbReference type="GO" id="GO:0005886">
    <property type="term" value="C:plasma membrane"/>
    <property type="evidence" value="ECO:0000266"/>
    <property type="project" value="RGD"/>
</dbReference>
<dbReference type="GO" id="GO:0097470">
    <property type="term" value="C:ribbon synapse"/>
    <property type="evidence" value="ECO:0000314"/>
    <property type="project" value="RGD"/>
</dbReference>
<dbReference type="GO" id="GO:1990795">
    <property type="term" value="C:rod bipolar cell terminal bouton"/>
    <property type="evidence" value="ECO:0000314"/>
    <property type="project" value="RGD"/>
</dbReference>
<dbReference type="GO" id="GO:0030552">
    <property type="term" value="F:cAMP binding"/>
    <property type="evidence" value="ECO:0000353"/>
    <property type="project" value="RGD"/>
</dbReference>
<dbReference type="GO" id="GO:0005085">
    <property type="term" value="F:guanyl-nucleotide exchange factor activity"/>
    <property type="evidence" value="ECO:0000250"/>
    <property type="project" value="UniProtKB"/>
</dbReference>
<dbReference type="GO" id="GO:0019904">
    <property type="term" value="F:protein domain specific binding"/>
    <property type="evidence" value="ECO:0000266"/>
    <property type="project" value="RGD"/>
</dbReference>
<dbReference type="GO" id="GO:0044325">
    <property type="term" value="F:transmembrane transporter binding"/>
    <property type="evidence" value="ECO:0000353"/>
    <property type="project" value="RGD"/>
</dbReference>
<dbReference type="GO" id="GO:0001525">
    <property type="term" value="P:angiogenesis"/>
    <property type="evidence" value="ECO:0007669"/>
    <property type="project" value="UniProtKB-KW"/>
</dbReference>
<dbReference type="GO" id="GO:0060840">
    <property type="term" value="P:artery development"/>
    <property type="evidence" value="ECO:0000270"/>
    <property type="project" value="RGD"/>
</dbReference>
<dbReference type="GO" id="GO:0008306">
    <property type="term" value="P:associative learning"/>
    <property type="evidence" value="ECO:0000266"/>
    <property type="project" value="RGD"/>
</dbReference>
<dbReference type="GO" id="GO:0071320">
    <property type="term" value="P:cellular response to cAMP"/>
    <property type="evidence" value="ECO:0000250"/>
    <property type="project" value="UniProtKB"/>
</dbReference>
<dbReference type="GO" id="GO:1904474">
    <property type="term" value="P:cellular response to L-dopa"/>
    <property type="evidence" value="ECO:0000270"/>
    <property type="project" value="RGD"/>
</dbReference>
<dbReference type="GO" id="GO:0071560">
    <property type="term" value="P:cellular response to transforming growth factor beta stimulus"/>
    <property type="evidence" value="ECO:0000270"/>
    <property type="project" value="RGD"/>
</dbReference>
<dbReference type="GO" id="GO:0071466">
    <property type="term" value="P:cellular response to xenobiotic stimulus"/>
    <property type="evidence" value="ECO:0000270"/>
    <property type="project" value="RGD"/>
</dbReference>
<dbReference type="GO" id="GO:1990791">
    <property type="term" value="P:dorsal root ganglion development"/>
    <property type="evidence" value="ECO:0000270"/>
    <property type="project" value="RGD"/>
</dbReference>
<dbReference type="GO" id="GO:0061028">
    <property type="term" value="P:establishment of endothelial barrier"/>
    <property type="evidence" value="ECO:0000250"/>
    <property type="project" value="UniProtKB"/>
</dbReference>
<dbReference type="GO" id="GO:0035556">
    <property type="term" value="P:intracellular signal transduction"/>
    <property type="evidence" value="ECO:0000266"/>
    <property type="project" value="RGD"/>
</dbReference>
<dbReference type="GO" id="GO:0097421">
    <property type="term" value="P:liver regeneration"/>
    <property type="evidence" value="ECO:0000270"/>
    <property type="project" value="RGD"/>
</dbReference>
<dbReference type="GO" id="GO:0010667">
    <property type="term" value="P:negative regulation of cardiac muscle cell apoptotic process"/>
    <property type="evidence" value="ECO:0000315"/>
    <property type="project" value="RGD"/>
</dbReference>
<dbReference type="GO" id="GO:0032966">
    <property type="term" value="P:negative regulation of collagen biosynthetic process"/>
    <property type="evidence" value="ECO:0000315"/>
    <property type="project" value="RGD"/>
</dbReference>
<dbReference type="GO" id="GO:0034242">
    <property type="term" value="P:negative regulation of syncytium formation by plasma membrane fusion"/>
    <property type="evidence" value="ECO:0000266"/>
    <property type="project" value="RGD"/>
</dbReference>
<dbReference type="GO" id="GO:0045766">
    <property type="term" value="P:positive regulation of angiogenesis"/>
    <property type="evidence" value="ECO:0000250"/>
    <property type="project" value="UniProtKB"/>
</dbReference>
<dbReference type="GO" id="GO:1904427">
    <property type="term" value="P:positive regulation of calcium ion transmembrane transport"/>
    <property type="evidence" value="ECO:0000315"/>
    <property type="project" value="RGD"/>
</dbReference>
<dbReference type="GO" id="GO:0045793">
    <property type="term" value="P:positive regulation of cell size"/>
    <property type="evidence" value="ECO:0000315"/>
    <property type="project" value="RGD"/>
</dbReference>
<dbReference type="GO" id="GO:0043547">
    <property type="term" value="P:positive regulation of GTPase activity"/>
    <property type="evidence" value="ECO:0000250"/>
    <property type="project" value="UniProtKB"/>
</dbReference>
<dbReference type="GO" id="GO:1903288">
    <property type="term" value="P:positive regulation of potassium ion import across plasma membrane"/>
    <property type="evidence" value="ECO:0000315"/>
    <property type="project" value="RGD"/>
</dbReference>
<dbReference type="GO" id="GO:0046827">
    <property type="term" value="P:positive regulation of protein export from nucleus"/>
    <property type="evidence" value="ECO:0000266"/>
    <property type="project" value="RGD"/>
</dbReference>
<dbReference type="GO" id="GO:0014911">
    <property type="term" value="P:positive regulation of smooth muscle cell migration"/>
    <property type="evidence" value="ECO:0000315"/>
    <property type="project" value="RGD"/>
</dbReference>
<dbReference type="GO" id="GO:0051496">
    <property type="term" value="P:positive regulation of stress fiber assembly"/>
    <property type="evidence" value="ECO:0000250"/>
    <property type="project" value="UniProtKB"/>
</dbReference>
<dbReference type="GO" id="GO:0060143">
    <property type="term" value="P:positive regulation of syncytium formation by plasma membrane fusion"/>
    <property type="evidence" value="ECO:0000266"/>
    <property type="project" value="RGD"/>
</dbReference>
<dbReference type="GO" id="GO:0045944">
    <property type="term" value="P:positive regulation of transcription by RNA polymerase II"/>
    <property type="evidence" value="ECO:0000315"/>
    <property type="project" value="RGD"/>
</dbReference>
<dbReference type="GO" id="GO:0032486">
    <property type="term" value="P:Rap protein signal transduction"/>
    <property type="evidence" value="ECO:0000250"/>
    <property type="project" value="UniProtKB"/>
</dbReference>
<dbReference type="GO" id="GO:0007265">
    <property type="term" value="P:Ras protein signal transduction"/>
    <property type="evidence" value="ECO:0000318"/>
    <property type="project" value="GO_Central"/>
</dbReference>
<dbReference type="GO" id="GO:0032956">
    <property type="term" value="P:regulation of actin cytoskeleton organization"/>
    <property type="evidence" value="ECO:0000315"/>
    <property type="project" value="RGD"/>
</dbReference>
<dbReference type="GO" id="GO:0045765">
    <property type="term" value="P:regulation of angiogenesis"/>
    <property type="evidence" value="ECO:0000266"/>
    <property type="project" value="RGD"/>
</dbReference>
<dbReference type="GO" id="GO:0051896">
    <property type="term" value="P:regulation of phosphatidylinositol 3-kinase/protein kinase B signal transduction"/>
    <property type="evidence" value="ECO:0000266"/>
    <property type="project" value="RGD"/>
</dbReference>
<dbReference type="GO" id="GO:0035094">
    <property type="term" value="P:response to nicotine"/>
    <property type="evidence" value="ECO:0000270"/>
    <property type="project" value="RGD"/>
</dbReference>
<dbReference type="GO" id="GO:0021510">
    <property type="term" value="P:spinal cord development"/>
    <property type="evidence" value="ECO:0000270"/>
    <property type="project" value="RGD"/>
</dbReference>
<dbReference type="CDD" id="cd00038">
    <property type="entry name" value="CAP_ED"/>
    <property type="match status" value="1"/>
</dbReference>
<dbReference type="CDD" id="cd04437">
    <property type="entry name" value="DEP_Epac"/>
    <property type="match status" value="1"/>
</dbReference>
<dbReference type="CDD" id="cd00155">
    <property type="entry name" value="RasGEF"/>
    <property type="match status" value="1"/>
</dbReference>
<dbReference type="CDD" id="cd06224">
    <property type="entry name" value="REM"/>
    <property type="match status" value="1"/>
</dbReference>
<dbReference type="FunFam" id="3.10.20.90:FF:000192">
    <property type="entry name" value="Rap guanine nucleotide exchange factor (GEF) 3"/>
    <property type="match status" value="1"/>
</dbReference>
<dbReference type="FunFam" id="1.10.8.1240:FF:000001">
    <property type="entry name" value="Rap guanine nucleotide exchange factor (GEF) 4"/>
    <property type="match status" value="1"/>
</dbReference>
<dbReference type="FunFam" id="1.10.840.10:FF:000002">
    <property type="entry name" value="Rap guanine nucleotide exchange factor 4"/>
    <property type="match status" value="1"/>
</dbReference>
<dbReference type="FunFam" id="2.60.120.10:FF:000015">
    <property type="entry name" value="Rap guanine nucleotide exchange factor 4"/>
    <property type="match status" value="1"/>
</dbReference>
<dbReference type="Gene3D" id="1.10.8.1240">
    <property type="match status" value="1"/>
</dbReference>
<dbReference type="Gene3D" id="2.60.120.10">
    <property type="entry name" value="Jelly Rolls"/>
    <property type="match status" value="1"/>
</dbReference>
<dbReference type="Gene3D" id="3.10.20.90">
    <property type="entry name" value="Phosphatidylinositol 3-kinase Catalytic Subunit, Chain A, domain 1"/>
    <property type="match status" value="1"/>
</dbReference>
<dbReference type="Gene3D" id="1.10.840.10">
    <property type="entry name" value="Ras guanine-nucleotide exchange factors catalytic domain"/>
    <property type="match status" value="1"/>
</dbReference>
<dbReference type="Gene3D" id="1.20.870.10">
    <property type="entry name" value="Son of sevenless (SoS) protein Chain: S domain 1"/>
    <property type="match status" value="1"/>
</dbReference>
<dbReference type="Gene3D" id="1.10.10.10">
    <property type="entry name" value="Winged helix-like DNA-binding domain superfamily/Winged helix DNA-binding domain"/>
    <property type="match status" value="1"/>
</dbReference>
<dbReference type="InterPro" id="IPR000595">
    <property type="entry name" value="cNMP-bd_dom"/>
</dbReference>
<dbReference type="InterPro" id="IPR018490">
    <property type="entry name" value="cNMP-bd_dom_sf"/>
</dbReference>
<dbReference type="InterPro" id="IPR000591">
    <property type="entry name" value="DEP_dom"/>
</dbReference>
<dbReference type="InterPro" id="IPR008937">
    <property type="entry name" value="Ras-like_GEF"/>
</dbReference>
<dbReference type="InterPro" id="IPR000651">
    <property type="entry name" value="Ras-like_Gua-exchang_fac_N"/>
</dbReference>
<dbReference type="InterPro" id="IPR019804">
    <property type="entry name" value="Ras_G-nucl-exch_fac_CS"/>
</dbReference>
<dbReference type="InterPro" id="IPR023578">
    <property type="entry name" value="Ras_GEF_dom_sf"/>
</dbReference>
<dbReference type="InterPro" id="IPR001895">
    <property type="entry name" value="RASGEF_cat_dom"/>
</dbReference>
<dbReference type="InterPro" id="IPR036964">
    <property type="entry name" value="RASGEF_cat_dom_sf"/>
</dbReference>
<dbReference type="InterPro" id="IPR014710">
    <property type="entry name" value="RmlC-like_jellyroll"/>
</dbReference>
<dbReference type="InterPro" id="IPR029071">
    <property type="entry name" value="Ubiquitin-like_domsf"/>
</dbReference>
<dbReference type="InterPro" id="IPR036388">
    <property type="entry name" value="WH-like_DNA-bd_sf"/>
</dbReference>
<dbReference type="InterPro" id="IPR036390">
    <property type="entry name" value="WH_DNA-bd_sf"/>
</dbReference>
<dbReference type="PANTHER" id="PTHR23113">
    <property type="entry name" value="GUANINE NUCLEOTIDE EXCHANGE FACTOR"/>
    <property type="match status" value="1"/>
</dbReference>
<dbReference type="PANTHER" id="PTHR23113:SF24">
    <property type="entry name" value="RAP GUANINE NUCLEOTIDE EXCHANGE FACTOR 3"/>
    <property type="match status" value="1"/>
</dbReference>
<dbReference type="Pfam" id="PF00027">
    <property type="entry name" value="cNMP_binding"/>
    <property type="match status" value="1"/>
</dbReference>
<dbReference type="Pfam" id="PF00610">
    <property type="entry name" value="DEP"/>
    <property type="match status" value="1"/>
</dbReference>
<dbReference type="Pfam" id="PF00617">
    <property type="entry name" value="RasGEF"/>
    <property type="match status" value="1"/>
</dbReference>
<dbReference type="Pfam" id="PF00618">
    <property type="entry name" value="RasGEF_N"/>
    <property type="match status" value="1"/>
</dbReference>
<dbReference type="PRINTS" id="PR00103">
    <property type="entry name" value="CAMPKINASE"/>
</dbReference>
<dbReference type="SMART" id="SM00100">
    <property type="entry name" value="cNMP"/>
    <property type="match status" value="1"/>
</dbReference>
<dbReference type="SMART" id="SM00049">
    <property type="entry name" value="DEP"/>
    <property type="match status" value="1"/>
</dbReference>
<dbReference type="SMART" id="SM00147">
    <property type="entry name" value="RasGEF"/>
    <property type="match status" value="1"/>
</dbReference>
<dbReference type="SMART" id="SM00229">
    <property type="entry name" value="RasGEFN"/>
    <property type="match status" value="1"/>
</dbReference>
<dbReference type="SUPFAM" id="SSF51206">
    <property type="entry name" value="cAMP-binding domain-like"/>
    <property type="match status" value="1"/>
</dbReference>
<dbReference type="SUPFAM" id="SSF48366">
    <property type="entry name" value="Ras GEF"/>
    <property type="match status" value="1"/>
</dbReference>
<dbReference type="SUPFAM" id="SSF54236">
    <property type="entry name" value="Ubiquitin-like"/>
    <property type="match status" value="1"/>
</dbReference>
<dbReference type="SUPFAM" id="SSF46785">
    <property type="entry name" value="Winged helix' DNA-binding domain"/>
    <property type="match status" value="1"/>
</dbReference>
<dbReference type="PROSITE" id="PS50042">
    <property type="entry name" value="CNMP_BINDING_3"/>
    <property type="match status" value="1"/>
</dbReference>
<dbReference type="PROSITE" id="PS50186">
    <property type="entry name" value="DEP"/>
    <property type="match status" value="1"/>
</dbReference>
<dbReference type="PROSITE" id="PS00720">
    <property type="entry name" value="RASGEF"/>
    <property type="match status" value="1"/>
</dbReference>
<dbReference type="PROSITE" id="PS50009">
    <property type="entry name" value="RASGEF_CAT"/>
    <property type="match status" value="1"/>
</dbReference>
<dbReference type="PROSITE" id="PS50212">
    <property type="entry name" value="RASGEF_NTER"/>
    <property type="match status" value="1"/>
</dbReference>
<organism>
    <name type="scientific">Rattus norvegicus</name>
    <name type="common">Rat</name>
    <dbReference type="NCBI Taxonomy" id="10116"/>
    <lineage>
        <taxon>Eukaryota</taxon>
        <taxon>Metazoa</taxon>
        <taxon>Chordata</taxon>
        <taxon>Craniata</taxon>
        <taxon>Vertebrata</taxon>
        <taxon>Euteleostomi</taxon>
        <taxon>Mammalia</taxon>
        <taxon>Eutheria</taxon>
        <taxon>Euarchontoglires</taxon>
        <taxon>Glires</taxon>
        <taxon>Rodentia</taxon>
        <taxon>Myomorpha</taxon>
        <taxon>Muroidea</taxon>
        <taxon>Muridae</taxon>
        <taxon>Murinae</taxon>
        <taxon>Rattus</taxon>
    </lineage>
</organism>
<name>RPGF3_RAT</name>
<keyword id="KW-0025">Alternative splicing</keyword>
<keyword id="KW-0037">Angiogenesis</keyword>
<keyword id="KW-0114">cAMP</keyword>
<keyword id="KW-0116">cAMP-binding</keyword>
<keyword id="KW-0963">Cytoplasm</keyword>
<keyword id="KW-0344">Guanine-nucleotide releasing factor</keyword>
<keyword id="KW-0472">Membrane</keyword>
<keyword id="KW-0547">Nucleotide-binding</keyword>
<keyword id="KW-0597">Phosphoprotein</keyword>
<keyword id="KW-1185">Reference proteome</keyword>
<accession>Q9Z1C8</accession>
<feature type="chain" id="PRO_0000068869" description="Rap guanine nucleotide exchange factor 3">
    <location>
        <begin position="1"/>
        <end position="926"/>
    </location>
</feature>
<feature type="domain" description="DEP" evidence="4">
    <location>
        <begin position="110"/>
        <end position="186"/>
    </location>
</feature>
<feature type="domain" description="N-terminal Ras-GEF" evidence="5">
    <location>
        <begin position="384"/>
        <end position="521"/>
    </location>
</feature>
<feature type="domain" description="Ras-GEF" evidence="6">
    <location>
        <begin position="665"/>
        <end position="892"/>
    </location>
</feature>
<feature type="region of interest" description="Interaction with PDE3B" evidence="1">
    <location>
        <begin position="218"/>
        <end position="242"/>
    </location>
</feature>
<feature type="region of interest" description="Disordered" evidence="7">
    <location>
        <begin position="369"/>
        <end position="388"/>
    </location>
</feature>
<feature type="region of interest" description="Interaction with PDE3B" evidence="1">
    <location>
        <begin position="398"/>
        <end position="422"/>
    </location>
</feature>
<feature type="binding site" evidence="2">
    <location>
        <begin position="311"/>
        <end position="314"/>
    </location>
    <ligand>
        <name>3',5'-cyclic AMP</name>
        <dbReference type="ChEBI" id="CHEBI:58165"/>
    </ligand>
</feature>
<feature type="binding site" evidence="2">
    <location>
        <begin position="321"/>
        <end position="322"/>
    </location>
    <ligand>
        <name>3',5'-cyclic AMP</name>
        <dbReference type="ChEBI" id="CHEBI:58165"/>
    </ligand>
</feature>
<feature type="modified residue" description="Phosphoserine" evidence="3">
    <location>
        <position position="79"/>
    </location>
</feature>
<feature type="modified residue" description="Phosphoserine" evidence="3">
    <location>
        <position position="531"/>
    </location>
</feature>
<feature type="modified residue" description="Phosphoserine" evidence="3">
    <location>
        <position position="867"/>
    </location>
</feature>
<feature type="splice variant" id="VSP_034367" description="In isoform 2." evidence="9">
    <location>
        <begin position="1"/>
        <end position="42"/>
    </location>
</feature>
<evidence type="ECO:0000250" key="1"/>
<evidence type="ECO:0000250" key="2">
    <source>
        <dbReference type="UniProtKB" id="O95398"/>
    </source>
</evidence>
<evidence type="ECO:0000250" key="3">
    <source>
        <dbReference type="UniProtKB" id="Q8VCC8"/>
    </source>
</evidence>
<evidence type="ECO:0000255" key="4">
    <source>
        <dbReference type="PROSITE-ProRule" id="PRU00066"/>
    </source>
</evidence>
<evidence type="ECO:0000255" key="5">
    <source>
        <dbReference type="PROSITE-ProRule" id="PRU00135"/>
    </source>
</evidence>
<evidence type="ECO:0000255" key="6">
    <source>
        <dbReference type="PROSITE-ProRule" id="PRU00168"/>
    </source>
</evidence>
<evidence type="ECO:0000256" key="7">
    <source>
        <dbReference type="SAM" id="MobiDB-lite"/>
    </source>
</evidence>
<evidence type="ECO:0000269" key="8">
    <source>
    </source>
</evidence>
<evidence type="ECO:0000303" key="9">
    <source>
    </source>
</evidence>
<evidence type="ECO:0000305" key="10"/>
<comment type="function">
    <text evidence="1">Guanine nucleotide exchange factor (GEF) for RAP1A and RAP2A small GTPases that is activated by binding cAMP. Through simultaneous binding of PDE3B to RAPGEF3 and PIK3R6 is assembled in a signaling complex in which it activates the PI3K gamma complex and which is involved in angiogenesis. Plays a role in the modulation of the cAMP-induced dynamic control of endothelial barrier function through a pathway that is independent on Rho-mediated signaling. Required for the actin rearrangement at cell-cell junctions, such as stress fibers and junctional actin (By similarity).</text>
</comment>
<comment type="subunit">
    <text evidence="2">Interacts with PDE3B and PIK3R6; form a signaling complex that regulates phosphatidylinositol 3-kinase gamma in angiogenesis.</text>
</comment>
<comment type="subcellular location">
    <subcellularLocation>
        <location>Cytoplasm</location>
    </subcellularLocation>
    <subcellularLocation>
        <location evidence="1">Membrane</location>
        <topology evidence="1">Peripheral membrane protein</topology>
    </subcellularLocation>
</comment>
<comment type="alternative products">
    <event type="alternative splicing"/>
    <isoform>
        <id>Q9Z1C8-1</id>
        <name>1</name>
        <sequence type="displayed"/>
    </isoform>
    <isoform>
        <id>Q9Z1C8-2</id>
        <name>2</name>
        <sequence type="described" ref="VSP_034367"/>
    </isoform>
</comment>
<comment type="tissue specificity">
    <text evidence="8">Expressed at low levels in adult brain. Strongly expressed in parts of the neonatal brain, including the septum and the thalamus.</text>
</comment>
<comment type="domain">
    <text evidence="1">The DEP domain is involved in membrane localization independent from regulation by cAMP.</text>
</comment>
<comment type="caution">
    <text evidence="10">It is uncertain whether Met-1 or Met-43 is the initiator.</text>
</comment>